<comment type="function">
    <text evidence="1">Binds heparin.</text>
</comment>
<comment type="subcellular location">
    <subcellularLocation>
        <location evidence="7">Cell membrane</location>
        <topology evidence="7">Single-pass membrane protein</topology>
    </subcellularLocation>
</comment>
<comment type="alternative products">
    <event type="alternative splicing"/>
    <isoform>
        <id>P58659-1</id>
        <name>1</name>
        <sequence type="displayed"/>
    </isoform>
    <isoform>
        <id>P58659-2</id>
        <name>2</name>
        <sequence type="described" ref="VSP_026601"/>
    </isoform>
    <isoform>
        <id>P58659-3</id>
        <name>3</name>
        <sequence type="described" ref="VSP_026600"/>
    </isoform>
</comment>
<comment type="tissue specificity">
    <text>Ubiquitous.</text>
</comment>
<comment type="similarity">
    <text evidence="7">Belongs to the EVA1 family.</text>
</comment>
<protein>
    <recommendedName>
        <fullName>Protein eva-1 homolog C</fullName>
    </recommendedName>
    <alternativeName>
        <fullName>Protein FAM176C</fullName>
    </alternativeName>
</protein>
<sequence length="440" mass="49287">MLLPGHPRPPPAPQSAQNQGLRRQVEPPGQLLRLFYCTVLVCSKETSALTDFSGYLTKLLQNHTAYACDGDYLNLQCPRHSTISVQSAFYGQDYQMCSSQEPISQREDNLTCVASTTLQKVLDECQNQRACHLLVNSRVFGPDLCPGSSKYLLVSFKCQPNELKNKTVCENQELKLHCHESKFLNIYSAAYGRRTQQRDICSSGAELLPPFDCLSYTALQVLSRRCYGKQRCKVLVDNYHFGSPCLPGVKKYLTVAYACVPKNILTAVDPAVANLNPSLKKDDEHGITFNPSGSRVVRKDGVIVSNSLAAFAYIRAHPERAALLFMSSVCIGLLLTLCALVIRVSCTKDFRELRQGREHLVLGSDKAEEDSEEDLEEEDSSDSQFPEELSRFCRTSYPAYSSIEAAELAERIERREQVIQEIWMNSGLDSSLPRNVGHFY</sequence>
<dbReference type="EMBL" id="AF358257">
    <property type="protein sequence ID" value="AAL40410.1"/>
    <property type="molecule type" value="mRNA"/>
</dbReference>
<dbReference type="EMBL" id="AK016443">
    <property type="protein sequence ID" value="BAB30238.1"/>
    <property type="molecule type" value="mRNA"/>
</dbReference>
<dbReference type="EMBL" id="BC100350">
    <property type="protein sequence ID" value="AAI00351.1"/>
    <property type="molecule type" value="mRNA"/>
</dbReference>
<dbReference type="EMBL" id="BC132305">
    <property type="protein sequence ID" value="AAI32306.1"/>
    <property type="molecule type" value="mRNA"/>
</dbReference>
<dbReference type="CCDS" id="CCDS28319.1">
    <molecule id="P58659-2"/>
</dbReference>
<dbReference type="CCDS" id="CCDS57038.1">
    <molecule id="P58659-1"/>
</dbReference>
<dbReference type="CCDS" id="CCDS84261.1">
    <molecule id="P58659-3"/>
</dbReference>
<dbReference type="RefSeq" id="NP_001186139.1">
    <molecule id="P58659-1"/>
    <property type="nucleotide sequence ID" value="NM_001199210.2"/>
</dbReference>
<dbReference type="RefSeq" id="NP_001303689.1">
    <molecule id="P58659-3"/>
    <property type="nucleotide sequence ID" value="NM_001316760.1"/>
</dbReference>
<dbReference type="RefSeq" id="NP_001303690.1">
    <property type="nucleotide sequence ID" value="NM_001316761.1"/>
</dbReference>
<dbReference type="RefSeq" id="NP_081903.1">
    <molecule id="P58659-2"/>
    <property type="nucleotide sequence ID" value="NM_027627.3"/>
</dbReference>
<dbReference type="RefSeq" id="XP_017172620.1">
    <molecule id="P58659-3"/>
    <property type="nucleotide sequence ID" value="XM_017317131.1"/>
</dbReference>
<dbReference type="RefSeq" id="XP_017172621.1">
    <molecule id="P58659-3"/>
    <property type="nucleotide sequence ID" value="XM_017317132.1"/>
</dbReference>
<dbReference type="SMR" id="P58659"/>
<dbReference type="FunCoup" id="P58659">
    <property type="interactions" value="223"/>
</dbReference>
<dbReference type="STRING" id="10090.ENSMUSP00000036695"/>
<dbReference type="GlyCosmos" id="P58659">
    <property type="glycosylation" value="3 sites, No reported glycans"/>
</dbReference>
<dbReference type="GlyGen" id="P58659">
    <property type="glycosylation" value="3 sites, 1 N-linked glycan (1 site)"/>
</dbReference>
<dbReference type="iPTMnet" id="P58659"/>
<dbReference type="PhosphoSitePlus" id="P58659"/>
<dbReference type="ProteomicsDB" id="275897">
    <molecule id="P58659-1"/>
</dbReference>
<dbReference type="ProteomicsDB" id="275898">
    <molecule id="P58659-2"/>
</dbReference>
<dbReference type="ProteomicsDB" id="275899">
    <molecule id="P58659-3"/>
</dbReference>
<dbReference type="Antibodypedia" id="2587">
    <property type="antibodies" value="50 antibodies from 12 providers"/>
</dbReference>
<dbReference type="Ensembl" id="ENSMUST00000037539.15">
    <molecule id="P58659-1"/>
    <property type="protein sequence ID" value="ENSMUSP00000036695.8"/>
    <property type="gene ID" value="ENSMUSG00000039903.19"/>
</dbReference>
<dbReference type="Ensembl" id="ENSMUST00000099543.10">
    <molecule id="P58659-2"/>
    <property type="protein sequence ID" value="ENSMUSP00000097141.4"/>
    <property type="gene ID" value="ENSMUSG00000039903.19"/>
</dbReference>
<dbReference type="GeneID" id="70967"/>
<dbReference type="KEGG" id="mmu:70967"/>
<dbReference type="UCSC" id="uc007zwp.2">
    <molecule id="P58659-1"/>
    <property type="organism name" value="mouse"/>
</dbReference>
<dbReference type="UCSC" id="uc007zwq.2">
    <molecule id="P58659-2"/>
    <property type="organism name" value="mouse"/>
</dbReference>
<dbReference type="AGR" id="MGI:1918217"/>
<dbReference type="CTD" id="59271"/>
<dbReference type="MGI" id="MGI:1918217">
    <property type="gene designation" value="Eva1c"/>
</dbReference>
<dbReference type="VEuPathDB" id="HostDB:ENSMUSG00000039903"/>
<dbReference type="GeneTree" id="ENSGT00940000162103"/>
<dbReference type="HOGENOM" id="CLU_050537_0_1_1"/>
<dbReference type="InParanoid" id="P58659"/>
<dbReference type="OMA" id="HKRHVAC"/>
<dbReference type="OrthoDB" id="62555at9989"/>
<dbReference type="PhylomeDB" id="P58659"/>
<dbReference type="TreeFam" id="TF328177"/>
<dbReference type="BioGRID-ORCS" id="70967">
    <property type="hits" value="1 hit in 76 CRISPR screens"/>
</dbReference>
<dbReference type="ChiTaRS" id="Eva1c">
    <property type="organism name" value="mouse"/>
</dbReference>
<dbReference type="PRO" id="PR:P58659"/>
<dbReference type="Proteomes" id="UP000000589">
    <property type="component" value="Chromosome 16"/>
</dbReference>
<dbReference type="RNAct" id="P58659">
    <property type="molecule type" value="protein"/>
</dbReference>
<dbReference type="Bgee" id="ENSMUSG00000039903">
    <property type="expression patterns" value="Expressed in lumbar dorsal root ganglion and 116 other cell types or tissues"/>
</dbReference>
<dbReference type="ExpressionAtlas" id="P58659">
    <property type="expression patterns" value="baseline and differential"/>
</dbReference>
<dbReference type="GO" id="GO:0005576">
    <property type="term" value="C:extracellular region"/>
    <property type="evidence" value="ECO:0007669"/>
    <property type="project" value="Ensembl"/>
</dbReference>
<dbReference type="GO" id="GO:0005886">
    <property type="term" value="C:plasma membrane"/>
    <property type="evidence" value="ECO:0007669"/>
    <property type="project" value="UniProtKB-SubCell"/>
</dbReference>
<dbReference type="GO" id="GO:0030246">
    <property type="term" value="F:carbohydrate binding"/>
    <property type="evidence" value="ECO:0007669"/>
    <property type="project" value="UniProtKB-KW"/>
</dbReference>
<dbReference type="GO" id="GO:0008201">
    <property type="term" value="F:heparin binding"/>
    <property type="evidence" value="ECO:0007669"/>
    <property type="project" value="Ensembl"/>
</dbReference>
<dbReference type="CDD" id="cd22828">
    <property type="entry name" value="Gal_Rha_Lectin_EVA1_EVA1C_rpt1"/>
    <property type="match status" value="1"/>
</dbReference>
<dbReference type="CDD" id="cd22829">
    <property type="entry name" value="Gal_Rha_Lectin_EVA1_EVA1C_rpt2"/>
    <property type="match status" value="1"/>
</dbReference>
<dbReference type="FunFam" id="2.60.120.740:FF:000003">
    <property type="entry name" value="Protein eva-1 homolog C"/>
    <property type="match status" value="1"/>
</dbReference>
<dbReference type="FunFam" id="2.60.120.740:FF:000004">
    <property type="entry name" value="Protein eva-1 homolog C"/>
    <property type="match status" value="1"/>
</dbReference>
<dbReference type="Gene3D" id="2.60.120.740">
    <property type="match status" value="2"/>
</dbReference>
<dbReference type="InterPro" id="IPR039500">
    <property type="entry name" value="EVA1_dom"/>
</dbReference>
<dbReference type="InterPro" id="IPR000922">
    <property type="entry name" value="Lectin_gal-bd_dom"/>
</dbReference>
<dbReference type="InterPro" id="IPR043159">
    <property type="entry name" value="Lectin_gal-bd_sf"/>
</dbReference>
<dbReference type="PANTHER" id="PTHR46780">
    <property type="entry name" value="PROTEIN EVA-1"/>
    <property type="match status" value="1"/>
</dbReference>
<dbReference type="Pfam" id="PF14851">
    <property type="entry name" value="FAM176"/>
    <property type="match status" value="1"/>
</dbReference>
<dbReference type="Pfam" id="PF02140">
    <property type="entry name" value="SUEL_Lectin"/>
    <property type="match status" value="2"/>
</dbReference>
<dbReference type="PROSITE" id="PS50228">
    <property type="entry name" value="SUEL_LECTIN"/>
    <property type="match status" value="2"/>
</dbReference>
<proteinExistence type="evidence at transcript level"/>
<feature type="signal peptide" evidence="2">
    <location>
        <begin position="1"/>
        <end position="48"/>
    </location>
</feature>
<feature type="chain" id="PRO_0000017672" description="Protein eva-1 homolog C">
    <location>
        <begin position="49"/>
        <end position="440"/>
    </location>
</feature>
<feature type="topological domain" description="Extracellular" evidence="2">
    <location>
        <begin position="49"/>
        <end position="321"/>
    </location>
</feature>
<feature type="transmembrane region" description="Helical" evidence="2">
    <location>
        <begin position="322"/>
        <end position="342"/>
    </location>
</feature>
<feature type="topological domain" description="Cytoplasmic" evidence="2">
    <location>
        <begin position="343"/>
        <end position="440"/>
    </location>
</feature>
<feature type="domain" description="SUEL-type lectin 1" evidence="3">
    <location>
        <begin position="67"/>
        <end position="159"/>
    </location>
</feature>
<feature type="domain" description="SUEL-type lectin 2" evidence="3">
    <location>
        <begin position="168"/>
        <end position="260"/>
    </location>
</feature>
<feature type="region of interest" description="Disordered" evidence="4">
    <location>
        <begin position="1"/>
        <end position="23"/>
    </location>
</feature>
<feature type="region of interest" description="Disordered" evidence="4">
    <location>
        <begin position="364"/>
        <end position="384"/>
    </location>
</feature>
<feature type="compositionally biased region" description="Pro residues" evidence="4">
    <location>
        <begin position="1"/>
        <end position="13"/>
    </location>
</feature>
<feature type="compositionally biased region" description="Acidic residues" evidence="4">
    <location>
        <begin position="367"/>
        <end position="381"/>
    </location>
</feature>
<feature type="glycosylation site" description="N-linked (GlcNAc...) asparagine" evidence="2">
    <location>
        <position position="62"/>
    </location>
</feature>
<feature type="glycosylation site" description="N-linked (GlcNAc...) asparagine" evidence="2">
    <location>
        <position position="109"/>
    </location>
</feature>
<feature type="glycosylation site" description="N-linked (GlcNAc...) asparagine" evidence="2">
    <location>
        <position position="165"/>
    </location>
</feature>
<feature type="splice variant" id="VSP_026600" description="In isoform 3." evidence="6">
    <location>
        <begin position="1"/>
        <end position="95"/>
    </location>
</feature>
<feature type="splice variant" id="VSP_026601" description="In isoform 2." evidence="5">
    <location>
        <begin position="212"/>
        <end position="259"/>
    </location>
</feature>
<feature type="sequence conflict" description="In Ref. 3; AAI32306." evidence="7" ref="3">
    <original>T</original>
    <variation>R</variation>
    <location>
        <position position="347"/>
    </location>
</feature>
<feature type="sequence conflict" description="In Ref. 1; AAL40410." evidence="7" ref="1">
    <original>A</original>
    <variation>S</variation>
    <location>
        <position position="367"/>
    </location>
</feature>
<feature type="sequence conflict" description="In Ref. 3; AAI32306." evidence="7" ref="3">
    <original>Q</original>
    <variation>E</variation>
    <location>
        <position position="384"/>
    </location>
</feature>
<gene>
    <name type="primary">Eva1c</name>
    <name type="synonym">Fam176c</name>
</gene>
<accession>P58659</accession>
<accession>A2RSZ2</accession>
<accession>Q497W3</accession>
<accession>Q9D4L3</accession>
<evidence type="ECO:0000250" key="1"/>
<evidence type="ECO:0000255" key="2"/>
<evidence type="ECO:0000255" key="3">
    <source>
        <dbReference type="PROSITE-ProRule" id="PRU00260"/>
    </source>
</evidence>
<evidence type="ECO:0000256" key="4">
    <source>
        <dbReference type="SAM" id="MobiDB-lite"/>
    </source>
</evidence>
<evidence type="ECO:0000303" key="5">
    <source>
    </source>
</evidence>
<evidence type="ECO:0000303" key="6">
    <source>
    </source>
</evidence>
<evidence type="ECO:0000305" key="7"/>
<organism>
    <name type="scientific">Mus musculus</name>
    <name type="common">Mouse</name>
    <dbReference type="NCBI Taxonomy" id="10090"/>
    <lineage>
        <taxon>Eukaryota</taxon>
        <taxon>Metazoa</taxon>
        <taxon>Chordata</taxon>
        <taxon>Craniata</taxon>
        <taxon>Vertebrata</taxon>
        <taxon>Euteleostomi</taxon>
        <taxon>Mammalia</taxon>
        <taxon>Eutheria</taxon>
        <taxon>Euarchontoglires</taxon>
        <taxon>Glires</taxon>
        <taxon>Rodentia</taxon>
        <taxon>Myomorpha</taxon>
        <taxon>Muroidea</taxon>
        <taxon>Muridae</taxon>
        <taxon>Murinae</taxon>
        <taxon>Mus</taxon>
        <taxon>Mus</taxon>
    </lineage>
</organism>
<name>EVA1C_MOUSE</name>
<keyword id="KW-0025">Alternative splicing</keyword>
<keyword id="KW-1003">Cell membrane</keyword>
<keyword id="KW-0325">Glycoprotein</keyword>
<keyword id="KW-0430">Lectin</keyword>
<keyword id="KW-0472">Membrane</keyword>
<keyword id="KW-1185">Reference proteome</keyword>
<keyword id="KW-0677">Repeat</keyword>
<keyword id="KW-0732">Signal</keyword>
<keyword id="KW-0812">Transmembrane</keyword>
<keyword id="KW-1133">Transmembrane helix</keyword>
<reference key="1">
    <citation type="journal article" date="2001" name="Genomics">
        <title>From PREDs and open reading frames to cDNA isolation: revisiting the human chromosome 21 transcription map.</title>
        <authorList>
            <person name="Reymond A."/>
            <person name="Friedli M."/>
            <person name="Neergaard Henrichsen C."/>
            <person name="Chapot F."/>
            <person name="Deutsch S."/>
            <person name="Ucla C."/>
            <person name="Rossier C."/>
            <person name="Lyle R."/>
            <person name="Guipponi M."/>
            <person name="Antonarakis S.E."/>
        </authorList>
    </citation>
    <scope>NUCLEOTIDE SEQUENCE [MRNA] (ISOFORM 1)</scope>
</reference>
<reference key="2">
    <citation type="journal article" date="2005" name="Science">
        <title>The transcriptional landscape of the mammalian genome.</title>
        <authorList>
            <person name="Carninci P."/>
            <person name="Kasukawa T."/>
            <person name="Katayama S."/>
            <person name="Gough J."/>
            <person name="Frith M.C."/>
            <person name="Maeda N."/>
            <person name="Oyama R."/>
            <person name="Ravasi T."/>
            <person name="Lenhard B."/>
            <person name="Wells C."/>
            <person name="Kodzius R."/>
            <person name="Shimokawa K."/>
            <person name="Bajic V.B."/>
            <person name="Brenner S.E."/>
            <person name="Batalov S."/>
            <person name="Forrest A.R."/>
            <person name="Zavolan M."/>
            <person name="Davis M.J."/>
            <person name="Wilming L.G."/>
            <person name="Aidinis V."/>
            <person name="Allen J.E."/>
            <person name="Ambesi-Impiombato A."/>
            <person name="Apweiler R."/>
            <person name="Aturaliya R.N."/>
            <person name="Bailey T.L."/>
            <person name="Bansal M."/>
            <person name="Baxter L."/>
            <person name="Beisel K.W."/>
            <person name="Bersano T."/>
            <person name="Bono H."/>
            <person name="Chalk A.M."/>
            <person name="Chiu K.P."/>
            <person name="Choudhary V."/>
            <person name="Christoffels A."/>
            <person name="Clutterbuck D.R."/>
            <person name="Crowe M.L."/>
            <person name="Dalla E."/>
            <person name="Dalrymple B.P."/>
            <person name="de Bono B."/>
            <person name="Della Gatta G."/>
            <person name="di Bernardo D."/>
            <person name="Down T."/>
            <person name="Engstrom P."/>
            <person name="Fagiolini M."/>
            <person name="Faulkner G."/>
            <person name="Fletcher C.F."/>
            <person name="Fukushima T."/>
            <person name="Furuno M."/>
            <person name="Futaki S."/>
            <person name="Gariboldi M."/>
            <person name="Georgii-Hemming P."/>
            <person name="Gingeras T.R."/>
            <person name="Gojobori T."/>
            <person name="Green R.E."/>
            <person name="Gustincich S."/>
            <person name="Harbers M."/>
            <person name="Hayashi Y."/>
            <person name="Hensch T.K."/>
            <person name="Hirokawa N."/>
            <person name="Hill D."/>
            <person name="Huminiecki L."/>
            <person name="Iacono M."/>
            <person name="Ikeo K."/>
            <person name="Iwama A."/>
            <person name="Ishikawa T."/>
            <person name="Jakt M."/>
            <person name="Kanapin A."/>
            <person name="Katoh M."/>
            <person name="Kawasawa Y."/>
            <person name="Kelso J."/>
            <person name="Kitamura H."/>
            <person name="Kitano H."/>
            <person name="Kollias G."/>
            <person name="Krishnan S.P."/>
            <person name="Kruger A."/>
            <person name="Kummerfeld S.K."/>
            <person name="Kurochkin I.V."/>
            <person name="Lareau L.F."/>
            <person name="Lazarevic D."/>
            <person name="Lipovich L."/>
            <person name="Liu J."/>
            <person name="Liuni S."/>
            <person name="McWilliam S."/>
            <person name="Madan Babu M."/>
            <person name="Madera M."/>
            <person name="Marchionni L."/>
            <person name="Matsuda H."/>
            <person name="Matsuzawa S."/>
            <person name="Miki H."/>
            <person name="Mignone F."/>
            <person name="Miyake S."/>
            <person name="Morris K."/>
            <person name="Mottagui-Tabar S."/>
            <person name="Mulder N."/>
            <person name="Nakano N."/>
            <person name="Nakauchi H."/>
            <person name="Ng P."/>
            <person name="Nilsson R."/>
            <person name="Nishiguchi S."/>
            <person name="Nishikawa S."/>
            <person name="Nori F."/>
            <person name="Ohara O."/>
            <person name="Okazaki Y."/>
            <person name="Orlando V."/>
            <person name="Pang K.C."/>
            <person name="Pavan W.J."/>
            <person name="Pavesi G."/>
            <person name="Pesole G."/>
            <person name="Petrovsky N."/>
            <person name="Piazza S."/>
            <person name="Reed J."/>
            <person name="Reid J.F."/>
            <person name="Ring B.Z."/>
            <person name="Ringwald M."/>
            <person name="Rost B."/>
            <person name="Ruan Y."/>
            <person name="Salzberg S.L."/>
            <person name="Sandelin A."/>
            <person name="Schneider C."/>
            <person name="Schoenbach C."/>
            <person name="Sekiguchi K."/>
            <person name="Semple C.A."/>
            <person name="Seno S."/>
            <person name="Sessa L."/>
            <person name="Sheng Y."/>
            <person name="Shibata Y."/>
            <person name="Shimada H."/>
            <person name="Shimada K."/>
            <person name="Silva D."/>
            <person name="Sinclair B."/>
            <person name="Sperling S."/>
            <person name="Stupka E."/>
            <person name="Sugiura K."/>
            <person name="Sultana R."/>
            <person name="Takenaka Y."/>
            <person name="Taki K."/>
            <person name="Tammoja K."/>
            <person name="Tan S.L."/>
            <person name="Tang S."/>
            <person name="Taylor M.S."/>
            <person name="Tegner J."/>
            <person name="Teichmann S.A."/>
            <person name="Ueda H.R."/>
            <person name="van Nimwegen E."/>
            <person name="Verardo R."/>
            <person name="Wei C.L."/>
            <person name="Yagi K."/>
            <person name="Yamanishi H."/>
            <person name="Zabarovsky E."/>
            <person name="Zhu S."/>
            <person name="Zimmer A."/>
            <person name="Hide W."/>
            <person name="Bult C."/>
            <person name="Grimmond S.M."/>
            <person name="Teasdale R.D."/>
            <person name="Liu E.T."/>
            <person name="Brusic V."/>
            <person name="Quackenbush J."/>
            <person name="Wahlestedt C."/>
            <person name="Mattick J.S."/>
            <person name="Hume D.A."/>
            <person name="Kai C."/>
            <person name="Sasaki D."/>
            <person name="Tomaru Y."/>
            <person name="Fukuda S."/>
            <person name="Kanamori-Katayama M."/>
            <person name="Suzuki M."/>
            <person name="Aoki J."/>
            <person name="Arakawa T."/>
            <person name="Iida J."/>
            <person name="Imamura K."/>
            <person name="Itoh M."/>
            <person name="Kato T."/>
            <person name="Kawaji H."/>
            <person name="Kawagashira N."/>
            <person name="Kawashima T."/>
            <person name="Kojima M."/>
            <person name="Kondo S."/>
            <person name="Konno H."/>
            <person name="Nakano K."/>
            <person name="Ninomiya N."/>
            <person name="Nishio T."/>
            <person name="Okada M."/>
            <person name="Plessy C."/>
            <person name="Shibata K."/>
            <person name="Shiraki T."/>
            <person name="Suzuki S."/>
            <person name="Tagami M."/>
            <person name="Waki K."/>
            <person name="Watahiki A."/>
            <person name="Okamura-Oho Y."/>
            <person name="Suzuki H."/>
            <person name="Kawai J."/>
            <person name="Hayashizaki Y."/>
        </authorList>
    </citation>
    <scope>NUCLEOTIDE SEQUENCE [LARGE SCALE MRNA] (ISOFORM 3)</scope>
    <source>
        <strain>C57BL/6J</strain>
        <tissue>Testis</tissue>
        <tissue>Thymus</tissue>
    </source>
</reference>
<reference key="3">
    <citation type="journal article" date="2004" name="Genome Res.">
        <title>The status, quality, and expansion of the NIH full-length cDNA project: the Mammalian Gene Collection (MGC).</title>
        <authorList>
            <consortium name="The MGC Project Team"/>
        </authorList>
    </citation>
    <scope>NUCLEOTIDE SEQUENCE [LARGE SCALE MRNA] (ISOFORMS 1 AND 2)</scope>
    <source>
        <tissue>Brain</tissue>
    </source>
</reference>